<accession>Q81JA6</accession>
<evidence type="ECO:0000255" key="1">
    <source>
        <dbReference type="HAMAP-Rule" id="MF_01469"/>
    </source>
</evidence>
<name>RNM5_BACCR</name>
<dbReference type="EC" id="3.1.26.8" evidence="1"/>
<dbReference type="EMBL" id="AE016877">
    <property type="protein sequence ID" value="AAP07143.1"/>
    <property type="molecule type" value="Genomic_DNA"/>
</dbReference>
<dbReference type="RefSeq" id="NP_829942.1">
    <property type="nucleotide sequence ID" value="NC_004722.1"/>
</dbReference>
<dbReference type="SMR" id="Q81JA6"/>
<dbReference type="STRING" id="226900.BC_0045"/>
<dbReference type="KEGG" id="bce:BC0045"/>
<dbReference type="PATRIC" id="fig|226900.8.peg.62"/>
<dbReference type="HOGENOM" id="CLU_109405_0_0_9"/>
<dbReference type="Proteomes" id="UP000001417">
    <property type="component" value="Chromosome"/>
</dbReference>
<dbReference type="GO" id="GO:0005737">
    <property type="term" value="C:cytoplasm"/>
    <property type="evidence" value="ECO:0007669"/>
    <property type="project" value="UniProtKB-SubCell"/>
</dbReference>
<dbReference type="GO" id="GO:0046872">
    <property type="term" value="F:metal ion binding"/>
    <property type="evidence" value="ECO:0007669"/>
    <property type="project" value="UniProtKB-KW"/>
</dbReference>
<dbReference type="GO" id="GO:0043822">
    <property type="term" value="F:ribonuclease M5 activity"/>
    <property type="evidence" value="ECO:0000318"/>
    <property type="project" value="GO_Central"/>
</dbReference>
<dbReference type="GO" id="GO:0019843">
    <property type="term" value="F:rRNA binding"/>
    <property type="evidence" value="ECO:0007669"/>
    <property type="project" value="UniProtKB-KW"/>
</dbReference>
<dbReference type="GO" id="GO:0006364">
    <property type="term" value="P:rRNA processing"/>
    <property type="evidence" value="ECO:0000318"/>
    <property type="project" value="GO_Central"/>
</dbReference>
<dbReference type="CDD" id="cd01027">
    <property type="entry name" value="TOPRIM_RNase_M5_like"/>
    <property type="match status" value="1"/>
</dbReference>
<dbReference type="FunFam" id="3.40.1360.10:FF:000006">
    <property type="entry name" value="Ribonuclease M5"/>
    <property type="match status" value="1"/>
</dbReference>
<dbReference type="Gene3D" id="3.40.1360.10">
    <property type="match status" value="1"/>
</dbReference>
<dbReference type="HAMAP" id="MF_01469">
    <property type="entry name" value="RNase_M5"/>
    <property type="match status" value="1"/>
</dbReference>
<dbReference type="InterPro" id="IPR004466">
    <property type="entry name" value="RNase_M5"/>
</dbReference>
<dbReference type="InterPro" id="IPR025156">
    <property type="entry name" value="RNase_M5_C"/>
</dbReference>
<dbReference type="InterPro" id="IPR006171">
    <property type="entry name" value="TOPRIM_dom"/>
</dbReference>
<dbReference type="InterPro" id="IPR034141">
    <property type="entry name" value="TOPRIM_RNase_M5-like"/>
</dbReference>
<dbReference type="NCBIfam" id="TIGR00334">
    <property type="entry name" value="5S_RNA_mat_M5"/>
    <property type="match status" value="1"/>
</dbReference>
<dbReference type="PANTHER" id="PTHR39156">
    <property type="entry name" value="RIBONUCLEASE M5"/>
    <property type="match status" value="1"/>
</dbReference>
<dbReference type="PANTHER" id="PTHR39156:SF1">
    <property type="entry name" value="RIBONUCLEASE M5"/>
    <property type="match status" value="1"/>
</dbReference>
<dbReference type="Pfam" id="PF13331">
    <property type="entry name" value="DUF4093"/>
    <property type="match status" value="1"/>
</dbReference>
<dbReference type="Pfam" id="PF13662">
    <property type="entry name" value="Toprim_4"/>
    <property type="match status" value="1"/>
</dbReference>
<dbReference type="SMART" id="SM00493">
    <property type="entry name" value="TOPRIM"/>
    <property type="match status" value="1"/>
</dbReference>
<dbReference type="SUPFAM" id="SSF110455">
    <property type="entry name" value="Toprim domain"/>
    <property type="match status" value="1"/>
</dbReference>
<dbReference type="PROSITE" id="PS50880">
    <property type="entry name" value="TOPRIM"/>
    <property type="match status" value="1"/>
</dbReference>
<protein>
    <recommendedName>
        <fullName evidence="1">Ribonuclease M5</fullName>
        <ecNumber evidence="1">3.1.26.8</ecNumber>
    </recommendedName>
    <alternativeName>
        <fullName evidence="1">RNase M5</fullName>
    </alternativeName>
    <alternativeName>
        <fullName evidence="1">Ribosomal RNA terminal maturase M5</fullName>
    </alternativeName>
</protein>
<proteinExistence type="inferred from homology"/>
<gene>
    <name evidence="1" type="primary">rnmV</name>
    <name type="ordered locus">BC_0045</name>
</gene>
<reference key="1">
    <citation type="journal article" date="2003" name="Nature">
        <title>Genome sequence of Bacillus cereus and comparative analysis with Bacillus anthracis.</title>
        <authorList>
            <person name="Ivanova N."/>
            <person name="Sorokin A."/>
            <person name="Anderson I."/>
            <person name="Galleron N."/>
            <person name="Candelon B."/>
            <person name="Kapatral V."/>
            <person name="Bhattacharyya A."/>
            <person name="Reznik G."/>
            <person name="Mikhailova N."/>
            <person name="Lapidus A."/>
            <person name="Chu L."/>
            <person name="Mazur M."/>
            <person name="Goltsman E."/>
            <person name="Larsen N."/>
            <person name="D'Souza M."/>
            <person name="Walunas T."/>
            <person name="Grechkin Y."/>
            <person name="Pusch G."/>
            <person name="Haselkorn R."/>
            <person name="Fonstein M."/>
            <person name="Ehrlich S.D."/>
            <person name="Overbeek R."/>
            <person name="Kyrpides N.C."/>
        </authorList>
    </citation>
    <scope>NUCLEOTIDE SEQUENCE [LARGE SCALE GENOMIC DNA]</scope>
    <source>
        <strain>ATCC 14579 / DSM 31 / CCUG 7414 / JCM 2152 / NBRC 15305 / NCIMB 9373 / NCTC 2599 / NRRL B-3711</strain>
    </source>
</reference>
<feature type="chain" id="PRO_0000416742" description="Ribonuclease M5">
    <location>
        <begin position="1"/>
        <end position="189"/>
    </location>
</feature>
<feature type="domain" description="Toprim" evidence="1">
    <location>
        <begin position="8"/>
        <end position="91"/>
    </location>
</feature>
<feature type="binding site" evidence="1">
    <location>
        <position position="14"/>
    </location>
    <ligand>
        <name>Mg(2+)</name>
        <dbReference type="ChEBI" id="CHEBI:18420"/>
        <label>1</label>
        <note>catalytic</note>
    </ligand>
</feature>
<feature type="binding site" evidence="1">
    <location>
        <position position="60"/>
    </location>
    <ligand>
        <name>Mg(2+)</name>
        <dbReference type="ChEBI" id="CHEBI:18420"/>
        <label>1</label>
        <note>catalytic</note>
    </ligand>
</feature>
<feature type="binding site" evidence="1">
    <location>
        <position position="60"/>
    </location>
    <ligand>
        <name>Mg(2+)</name>
        <dbReference type="ChEBI" id="CHEBI:18420"/>
        <label>2</label>
    </ligand>
</feature>
<feature type="binding site" evidence="1">
    <location>
        <position position="62"/>
    </location>
    <ligand>
        <name>Mg(2+)</name>
        <dbReference type="ChEBI" id="CHEBI:18420"/>
        <label>2</label>
    </ligand>
</feature>
<comment type="function">
    <text evidence="1">Required for correct processing of both the 5' and 3' ends of 5S rRNA precursor. Cleaves both sides of a double-stranded region yielding mature 5S rRNA in one step.</text>
</comment>
<comment type="catalytic activity">
    <reaction evidence="1">
        <text>Endonucleolytic cleavage of RNA, removing 21 and 42 nucleotides, respectively, from the 5'- and 3'-termini of a 5S-rRNA precursor.</text>
        <dbReference type="EC" id="3.1.26.8"/>
    </reaction>
</comment>
<comment type="cofactor">
    <cofactor evidence="1">
        <name>Mg(2+)</name>
        <dbReference type="ChEBI" id="CHEBI:18420"/>
    </cofactor>
    <text evidence="1">Binds two Mg(2+) per subunit.</text>
</comment>
<comment type="subcellular location">
    <subcellularLocation>
        <location evidence="1">Cytoplasm</location>
    </subcellularLocation>
</comment>
<comment type="similarity">
    <text evidence="1">Belongs to the ribonuclease M5 family.</text>
</comment>
<sequence>MEASMKIKEIIVVEGKDDTVAIKRAVDADTIETNGSAIGDHVIEQVKLAQQKRGVIIFTDPDYPGERIRKIISDKVPGCKHAFLPKEEALAKRKKGVGIEHASNESIRRALENIHEEMEAYTGEISWSDLVDAGLVGGEMAKSRRERMGKLLKIGYTNAKQLHKRLQMFQVSKESFAEAYKQVIQEEKK</sequence>
<keyword id="KW-0963">Cytoplasm</keyword>
<keyword id="KW-0255">Endonuclease</keyword>
<keyword id="KW-0378">Hydrolase</keyword>
<keyword id="KW-0460">Magnesium</keyword>
<keyword id="KW-0479">Metal-binding</keyword>
<keyword id="KW-0540">Nuclease</keyword>
<keyword id="KW-1185">Reference proteome</keyword>
<keyword id="KW-0690">Ribosome biogenesis</keyword>
<keyword id="KW-0694">RNA-binding</keyword>
<keyword id="KW-0698">rRNA processing</keyword>
<keyword id="KW-0699">rRNA-binding</keyword>
<organism>
    <name type="scientific">Bacillus cereus (strain ATCC 14579 / DSM 31 / CCUG 7414 / JCM 2152 / NBRC 15305 / NCIMB 9373 / NCTC 2599 / NRRL B-3711)</name>
    <dbReference type="NCBI Taxonomy" id="226900"/>
    <lineage>
        <taxon>Bacteria</taxon>
        <taxon>Bacillati</taxon>
        <taxon>Bacillota</taxon>
        <taxon>Bacilli</taxon>
        <taxon>Bacillales</taxon>
        <taxon>Bacillaceae</taxon>
        <taxon>Bacillus</taxon>
        <taxon>Bacillus cereus group</taxon>
    </lineage>
</organism>